<proteinExistence type="evidence at protein level"/>
<name>UTP23_YEAST</name>
<keyword id="KW-0002">3D-structure</keyword>
<keyword id="KW-0496">Mitochondrion</keyword>
<keyword id="KW-0539">Nucleus</keyword>
<keyword id="KW-0597">Phosphoprotein</keyword>
<keyword id="KW-1185">Reference proteome</keyword>
<keyword id="KW-0690">Ribosome biogenesis</keyword>
<keyword id="KW-0694">RNA-binding</keyword>
<keyword id="KW-0698">rRNA processing</keyword>
<reference key="1">
    <citation type="journal article" date="1996" name="Yeast">
        <title>The sequence of a 30 kb fragment on the left arm of chromosome XV from Saccharomyces cerevisiae reveals 15 open reading frames, five of which correspond to previously identified genes.</title>
        <authorList>
            <person name="Sterky F."/>
            <person name="Holmberg A."/>
            <person name="Pettersson B."/>
            <person name="Uhlen M."/>
        </authorList>
    </citation>
    <scope>NUCLEOTIDE SEQUENCE [GENOMIC DNA]</scope>
    <source>
        <strain>ATCC 96604 / S288c / FY1679</strain>
    </source>
</reference>
<reference key="2">
    <citation type="journal article" date="1997" name="Nature">
        <title>The nucleotide sequence of Saccharomyces cerevisiae chromosome XV.</title>
        <authorList>
            <person name="Dujon B."/>
            <person name="Albermann K."/>
            <person name="Aldea M."/>
            <person name="Alexandraki D."/>
            <person name="Ansorge W."/>
            <person name="Arino J."/>
            <person name="Benes V."/>
            <person name="Bohn C."/>
            <person name="Bolotin-Fukuhara M."/>
            <person name="Bordonne R."/>
            <person name="Boyer J."/>
            <person name="Camasses A."/>
            <person name="Casamayor A."/>
            <person name="Casas C."/>
            <person name="Cheret G."/>
            <person name="Cziepluch C."/>
            <person name="Daignan-Fornier B."/>
            <person name="Dang V.-D."/>
            <person name="de Haan M."/>
            <person name="Delius H."/>
            <person name="Durand P."/>
            <person name="Fairhead C."/>
            <person name="Feldmann H."/>
            <person name="Gaillon L."/>
            <person name="Galisson F."/>
            <person name="Gamo F.-J."/>
            <person name="Gancedo C."/>
            <person name="Goffeau A."/>
            <person name="Goulding S.E."/>
            <person name="Grivell L.A."/>
            <person name="Habbig B."/>
            <person name="Hand N.J."/>
            <person name="Hani J."/>
            <person name="Hattenhorst U."/>
            <person name="Hebling U."/>
            <person name="Hernando Y."/>
            <person name="Herrero E."/>
            <person name="Heumann K."/>
            <person name="Hiesel R."/>
            <person name="Hilger F."/>
            <person name="Hofmann B."/>
            <person name="Hollenberg C.P."/>
            <person name="Hughes B."/>
            <person name="Jauniaux J.-C."/>
            <person name="Kalogeropoulos A."/>
            <person name="Katsoulou C."/>
            <person name="Kordes E."/>
            <person name="Lafuente M.J."/>
            <person name="Landt O."/>
            <person name="Louis E.J."/>
            <person name="Maarse A.C."/>
            <person name="Madania A."/>
            <person name="Mannhaupt G."/>
            <person name="Marck C."/>
            <person name="Martin R.P."/>
            <person name="Mewes H.-W."/>
            <person name="Michaux G."/>
            <person name="Paces V."/>
            <person name="Parle-McDermott A.G."/>
            <person name="Pearson B.M."/>
            <person name="Perrin A."/>
            <person name="Pettersson B."/>
            <person name="Poch O."/>
            <person name="Pohl T.M."/>
            <person name="Poirey R."/>
            <person name="Portetelle D."/>
            <person name="Pujol A."/>
            <person name="Purnelle B."/>
            <person name="Ramezani Rad M."/>
            <person name="Rechmann S."/>
            <person name="Schwager C."/>
            <person name="Schweizer M."/>
            <person name="Sor F."/>
            <person name="Sterky F."/>
            <person name="Tarassov I.A."/>
            <person name="Teodoru C."/>
            <person name="Tettelin H."/>
            <person name="Thierry A."/>
            <person name="Tobiasch E."/>
            <person name="Tzermia M."/>
            <person name="Uhlen M."/>
            <person name="Unseld M."/>
            <person name="Valens M."/>
            <person name="Vandenbol M."/>
            <person name="Vetter I."/>
            <person name="Vlcek C."/>
            <person name="Voet M."/>
            <person name="Volckaert G."/>
            <person name="Voss H."/>
            <person name="Wambutt R."/>
            <person name="Wedler H."/>
            <person name="Wiemann S."/>
            <person name="Winsor B."/>
            <person name="Wolfe K.H."/>
            <person name="Zollner A."/>
            <person name="Zumstein E."/>
            <person name="Kleine K."/>
        </authorList>
    </citation>
    <scope>NUCLEOTIDE SEQUENCE [LARGE SCALE GENOMIC DNA]</scope>
    <source>
        <strain>ATCC 204508 / S288c</strain>
    </source>
</reference>
<reference key="3">
    <citation type="journal article" date="2014" name="G3 (Bethesda)">
        <title>The reference genome sequence of Saccharomyces cerevisiae: Then and now.</title>
        <authorList>
            <person name="Engel S.R."/>
            <person name="Dietrich F.S."/>
            <person name="Fisk D.G."/>
            <person name="Binkley G."/>
            <person name="Balakrishnan R."/>
            <person name="Costanzo M.C."/>
            <person name="Dwight S.S."/>
            <person name="Hitz B.C."/>
            <person name="Karra K."/>
            <person name="Nash R.S."/>
            <person name="Weng S."/>
            <person name="Wong E.D."/>
            <person name="Lloyd P."/>
            <person name="Skrzypek M.S."/>
            <person name="Miyasato S.R."/>
            <person name="Simison M."/>
            <person name="Cherry J.M."/>
        </authorList>
    </citation>
    <scope>GENOME REANNOTATION</scope>
    <source>
        <strain>ATCC 204508 / S288c</strain>
    </source>
</reference>
<reference key="4">
    <citation type="journal article" date="2002" name="Nat. Genet.">
        <title>Large-scale prediction of Saccharomyces cerevisiae gene function using overlapping transcriptional clusters.</title>
        <authorList>
            <person name="Wu L.F."/>
            <person name="Hughes T.R."/>
            <person name="Davierwala A.P."/>
            <person name="Robinson M.D."/>
            <person name="Stoughton R."/>
            <person name="Altschuler S.J."/>
        </authorList>
    </citation>
    <scope>FUNCTION</scope>
</reference>
<reference key="5">
    <citation type="journal article" date="2003" name="Mol. Cell">
        <title>Assigning function to yeast proteins by integration of technologies.</title>
        <authorList>
            <person name="Hazbun T.R."/>
            <person name="Malmstroem L."/>
            <person name="Anderson S."/>
            <person name="Graczyk B.J."/>
            <person name="Fox B."/>
            <person name="Riffle M."/>
            <person name="Sundin B.A."/>
            <person name="Aranda J.D."/>
            <person name="McDonald W.H."/>
            <person name="Chiu C.-H."/>
            <person name="Snydsman B.E."/>
            <person name="Bradley P."/>
            <person name="Muller E.G.D."/>
            <person name="Fields S."/>
            <person name="Baker D."/>
            <person name="Yates J.R. III"/>
            <person name="Davis T.N."/>
        </authorList>
    </citation>
    <scope>IDENTIFICATION BY MASS SPECTROMETRY</scope>
    <scope>SUBCELLULAR LOCATION [LARGE SCALE ANALYSIS]</scope>
</reference>
<reference key="6">
    <citation type="journal article" date="2003" name="Nature">
        <title>Global analysis of protein localization in budding yeast.</title>
        <authorList>
            <person name="Huh W.-K."/>
            <person name="Falvo J.V."/>
            <person name="Gerke L.C."/>
            <person name="Carroll A.S."/>
            <person name="Howson R.W."/>
            <person name="Weissman J.S."/>
            <person name="O'Shea E.K."/>
        </authorList>
    </citation>
    <scope>SUBCELLULAR LOCATION [LARGE SCALE ANALYSIS]</scope>
</reference>
<reference key="7">
    <citation type="journal article" date="2003" name="Nature">
        <title>Global analysis of protein expression in yeast.</title>
        <authorList>
            <person name="Ghaemmaghami S."/>
            <person name="Huh W.-K."/>
            <person name="Bower K."/>
            <person name="Howson R.W."/>
            <person name="Belle A."/>
            <person name="Dephoure N."/>
            <person name="O'Shea E.K."/>
            <person name="Weissman J.S."/>
        </authorList>
    </citation>
    <scope>LEVEL OF PROTEIN EXPRESSION [LARGE SCALE ANALYSIS]</scope>
</reference>
<reference key="8">
    <citation type="journal article" date="2008" name="Mol. Cell. Proteomics">
        <title>A multidimensional chromatography technology for in-depth phosphoproteome analysis.</title>
        <authorList>
            <person name="Albuquerque C.P."/>
            <person name="Smolka M.B."/>
            <person name="Payne S.H."/>
            <person name="Bafna V."/>
            <person name="Eng J."/>
            <person name="Zhou H."/>
        </authorList>
    </citation>
    <scope>PHOSPHORYLATION [LARGE SCALE ANALYSIS] AT SER-182</scope>
    <scope>IDENTIFICATION BY MASS SPECTROMETRY [LARGE SCALE ANALYSIS]</scope>
</reference>
<gene>
    <name type="primary">UTP23</name>
    <name type="ordered locus">YOR004W</name>
</gene>
<accession>Q12339</accession>
<accession>D6W270</accession>
<evidence type="ECO:0000256" key="1">
    <source>
        <dbReference type="SAM" id="MobiDB-lite"/>
    </source>
</evidence>
<evidence type="ECO:0000269" key="2">
    <source>
    </source>
</evidence>
<evidence type="ECO:0000269" key="3">
    <source>
    </source>
</evidence>
<evidence type="ECO:0000269" key="4">
    <source>
    </source>
</evidence>
<evidence type="ECO:0000269" key="5">
    <source>
    </source>
</evidence>
<evidence type="ECO:0000305" key="6"/>
<evidence type="ECO:0007744" key="7">
    <source>
    </source>
</evidence>
<evidence type="ECO:0007829" key="8">
    <source>
        <dbReference type="PDB" id="4MJ7"/>
    </source>
</evidence>
<dbReference type="EMBL" id="U43491">
    <property type="protein sequence ID" value="AAC49483.1"/>
    <property type="molecule type" value="Genomic_DNA"/>
</dbReference>
<dbReference type="EMBL" id="Z74912">
    <property type="protein sequence ID" value="CAA99192.1"/>
    <property type="molecule type" value="Genomic_DNA"/>
</dbReference>
<dbReference type="EMBL" id="BK006948">
    <property type="protein sequence ID" value="DAA10786.1"/>
    <property type="molecule type" value="Genomic_DNA"/>
</dbReference>
<dbReference type="PIR" id="S61987">
    <property type="entry name" value="S61987"/>
</dbReference>
<dbReference type="RefSeq" id="NP_014646.1">
    <property type="nucleotide sequence ID" value="NM_001183423.1"/>
</dbReference>
<dbReference type="PDB" id="4MJ7">
    <property type="method" value="X-ray"/>
    <property type="resolution" value="2.51 A"/>
    <property type="chains" value="A/B=1-159"/>
</dbReference>
<dbReference type="PDBsum" id="4MJ7"/>
<dbReference type="SMR" id="Q12339"/>
<dbReference type="BioGRID" id="34407">
    <property type="interactions" value="176"/>
</dbReference>
<dbReference type="DIP" id="DIP-4352N"/>
<dbReference type="FunCoup" id="Q12339">
    <property type="interactions" value="1250"/>
</dbReference>
<dbReference type="IntAct" id="Q12339">
    <property type="interactions" value="80"/>
</dbReference>
<dbReference type="MINT" id="Q12339"/>
<dbReference type="STRING" id="4932.YOR004W"/>
<dbReference type="iPTMnet" id="Q12339"/>
<dbReference type="PaxDb" id="4932-YOR004W"/>
<dbReference type="PeptideAtlas" id="Q12339"/>
<dbReference type="EnsemblFungi" id="YOR004W_mRNA">
    <property type="protein sequence ID" value="YOR004W"/>
    <property type="gene ID" value="YOR004W"/>
</dbReference>
<dbReference type="GeneID" id="854165"/>
<dbReference type="KEGG" id="sce:YOR004W"/>
<dbReference type="AGR" id="SGD:S000005530"/>
<dbReference type="SGD" id="S000005530">
    <property type="gene designation" value="UTP23"/>
</dbReference>
<dbReference type="VEuPathDB" id="FungiDB:YOR004W"/>
<dbReference type="eggNOG" id="KOG3164">
    <property type="taxonomic scope" value="Eukaryota"/>
</dbReference>
<dbReference type="GeneTree" id="ENSGT00940000153117"/>
<dbReference type="HOGENOM" id="CLU_053567_1_1_1"/>
<dbReference type="InParanoid" id="Q12339"/>
<dbReference type="OMA" id="CCMQALY"/>
<dbReference type="OrthoDB" id="25675at2759"/>
<dbReference type="BioCyc" id="YEAST:G3O-33554-MONOMER"/>
<dbReference type="BioGRID-ORCS" id="854165">
    <property type="hits" value="0 hits in 10 CRISPR screens"/>
</dbReference>
<dbReference type="EvolutionaryTrace" id="Q12339"/>
<dbReference type="PRO" id="PR:Q12339"/>
<dbReference type="Proteomes" id="UP000002311">
    <property type="component" value="Chromosome XV"/>
</dbReference>
<dbReference type="RNAct" id="Q12339">
    <property type="molecule type" value="protein"/>
</dbReference>
<dbReference type="GO" id="GO:0005739">
    <property type="term" value="C:mitochondrion"/>
    <property type="evidence" value="ECO:0007005"/>
    <property type="project" value="SGD"/>
</dbReference>
<dbReference type="GO" id="GO:0005730">
    <property type="term" value="C:nucleolus"/>
    <property type="evidence" value="ECO:0000314"/>
    <property type="project" value="SGD"/>
</dbReference>
<dbReference type="GO" id="GO:0005654">
    <property type="term" value="C:nucleoplasm"/>
    <property type="evidence" value="ECO:0000304"/>
    <property type="project" value="Reactome"/>
</dbReference>
<dbReference type="GO" id="GO:0032040">
    <property type="term" value="C:small-subunit processome"/>
    <property type="evidence" value="ECO:0000314"/>
    <property type="project" value="SGD"/>
</dbReference>
<dbReference type="GO" id="GO:0070181">
    <property type="term" value="F:small ribosomal subunit rRNA binding"/>
    <property type="evidence" value="ECO:0000314"/>
    <property type="project" value="SGD"/>
</dbReference>
<dbReference type="GO" id="GO:0000480">
    <property type="term" value="P:endonucleolytic cleavage in 5'-ETS of tricistronic rRNA transcript (SSU-rRNA, 5.8S rRNA, LSU-rRNA)"/>
    <property type="evidence" value="ECO:0000315"/>
    <property type="project" value="SGD"/>
</dbReference>
<dbReference type="GO" id="GO:0000447">
    <property type="term" value="P:endonucleolytic cleavage in ITS1 to separate SSU-rRNA from 5.8S rRNA and LSU-rRNA from tricistronic rRNA transcript (SSU-rRNA, 5.8S rRNA, LSU-rRNA)"/>
    <property type="evidence" value="ECO:0000315"/>
    <property type="project" value="SGD"/>
</dbReference>
<dbReference type="GO" id="GO:0000472">
    <property type="term" value="P:endonucleolytic cleavage to generate mature 5'-end of SSU-rRNA from (SSU-rRNA, 5.8S rRNA, LSU-rRNA)"/>
    <property type="evidence" value="ECO:0000315"/>
    <property type="project" value="SGD"/>
</dbReference>
<dbReference type="GO" id="GO:0030490">
    <property type="term" value="P:maturation of SSU-rRNA"/>
    <property type="evidence" value="ECO:0000303"/>
    <property type="project" value="ComplexPortal"/>
</dbReference>
<dbReference type="GO" id="GO:0000462">
    <property type="term" value="P:maturation of SSU-rRNA from tricistronic rRNA transcript (SSU-rRNA, 5.8S rRNA, LSU-rRNA)"/>
    <property type="evidence" value="ECO:0000315"/>
    <property type="project" value="GO_Central"/>
</dbReference>
<dbReference type="CDD" id="cd09865">
    <property type="entry name" value="PIN_ScUtp23p-like"/>
    <property type="match status" value="1"/>
</dbReference>
<dbReference type="FunFam" id="3.40.50.1010:FF:000006">
    <property type="entry name" value="rRNA-processing protein UTP23 homolog"/>
    <property type="match status" value="1"/>
</dbReference>
<dbReference type="Gene3D" id="3.40.50.1010">
    <property type="entry name" value="5'-nuclease"/>
    <property type="match status" value="1"/>
</dbReference>
<dbReference type="InterPro" id="IPR006984">
    <property type="entry name" value="Fcf1/Utp23"/>
</dbReference>
<dbReference type="InterPro" id="IPR029060">
    <property type="entry name" value="PIN-like_dom_sf"/>
</dbReference>
<dbReference type="PANTHER" id="PTHR12416">
    <property type="entry name" value="RRNA-PROCESSING PROTEIN UTP23 HOMOLOG"/>
    <property type="match status" value="1"/>
</dbReference>
<dbReference type="Pfam" id="PF04900">
    <property type="entry name" value="Fcf1"/>
    <property type="match status" value="1"/>
</dbReference>
<dbReference type="Pfam" id="PF24779">
    <property type="entry name" value="UTP23_sensor"/>
    <property type="match status" value="1"/>
</dbReference>
<dbReference type="SUPFAM" id="SSF88723">
    <property type="entry name" value="PIN domain-like"/>
    <property type="match status" value="1"/>
</dbReference>
<comment type="function">
    <text evidence="2">Involved in rRNA-processing and ribosome biogenesis.</text>
</comment>
<comment type="subcellular location">
    <subcellularLocation>
        <location evidence="3">Mitochondrion</location>
    </subcellularLocation>
    <subcellularLocation>
        <location evidence="3 5">Nucleus</location>
        <location evidence="3 5">Nucleolus</location>
    </subcellularLocation>
</comment>
<comment type="miscellaneous">
    <text evidence="4">Present with 6960 molecules/cell in log phase SD medium.</text>
</comment>
<comment type="similarity">
    <text evidence="6">Belongs to the UTP23/FCF1 family. UTP23 subfamily.</text>
</comment>
<organism>
    <name type="scientific">Saccharomyces cerevisiae (strain ATCC 204508 / S288c)</name>
    <name type="common">Baker's yeast</name>
    <dbReference type="NCBI Taxonomy" id="559292"/>
    <lineage>
        <taxon>Eukaryota</taxon>
        <taxon>Fungi</taxon>
        <taxon>Dikarya</taxon>
        <taxon>Ascomycota</taxon>
        <taxon>Saccharomycotina</taxon>
        <taxon>Saccharomycetes</taxon>
        <taxon>Saccharomycetales</taxon>
        <taxon>Saccharomycetaceae</taxon>
        <taxon>Saccharomyces</taxon>
    </lineage>
</organism>
<protein>
    <recommendedName>
        <fullName>rRNA-processing protein UTP23</fullName>
    </recommendedName>
    <alternativeName>
        <fullName>U three protein 23</fullName>
    </alternativeName>
    <alternativeName>
        <fullName>U3 small nucleolar RNA-associated protein 23</fullName>
        <shortName>U3 snoRNA-associated protein 23</shortName>
    </alternativeName>
</protein>
<feature type="chain" id="PRO_0000245250" description="rRNA-processing protein UTP23">
    <location>
        <begin position="1"/>
        <end position="254"/>
    </location>
</feature>
<feature type="region of interest" description="Disordered" evidence="1">
    <location>
        <begin position="172"/>
        <end position="254"/>
    </location>
</feature>
<feature type="compositionally biased region" description="Basic and acidic residues" evidence="1">
    <location>
        <begin position="175"/>
        <end position="192"/>
    </location>
</feature>
<feature type="compositionally biased region" description="Basic and acidic residues" evidence="1">
    <location>
        <begin position="218"/>
        <end position="228"/>
    </location>
</feature>
<feature type="compositionally biased region" description="Basic residues" evidence="1">
    <location>
        <begin position="229"/>
        <end position="240"/>
    </location>
</feature>
<feature type="compositionally biased region" description="Polar residues" evidence="1">
    <location>
        <begin position="241"/>
        <end position="254"/>
    </location>
</feature>
<feature type="modified residue" description="Phosphoserine" evidence="7">
    <location>
        <position position="182"/>
    </location>
</feature>
<feature type="helix" evidence="8">
    <location>
        <begin position="4"/>
        <end position="18"/>
    </location>
</feature>
<feature type="strand" evidence="8">
    <location>
        <begin position="24"/>
        <end position="30"/>
    </location>
</feature>
<feature type="helix" evidence="8">
    <location>
        <begin position="32"/>
        <end position="41"/>
    </location>
</feature>
<feature type="helix" evidence="8">
    <location>
        <begin position="45"/>
        <end position="52"/>
    </location>
</feature>
<feature type="strand" evidence="8">
    <location>
        <begin position="57"/>
        <end position="62"/>
    </location>
</feature>
<feature type="helix" evidence="8">
    <location>
        <begin position="63"/>
        <end position="72"/>
    </location>
</feature>
<feature type="helix" evidence="8">
    <location>
        <begin position="75"/>
        <end position="81"/>
    </location>
</feature>
<feature type="strand" evidence="8">
    <location>
        <begin position="84"/>
        <end position="87"/>
    </location>
</feature>
<feature type="strand" evidence="8">
    <location>
        <begin position="93"/>
        <end position="95"/>
    </location>
</feature>
<feature type="helix" evidence="8">
    <location>
        <begin position="99"/>
        <end position="107"/>
    </location>
</feature>
<feature type="strand" evidence="8">
    <location>
        <begin position="117"/>
        <end position="120"/>
    </location>
</feature>
<feature type="helix" evidence="8">
    <location>
        <begin position="124"/>
        <end position="131"/>
    </location>
</feature>
<feature type="strand" evidence="8">
    <location>
        <begin position="138"/>
        <end position="141"/>
    </location>
</feature>
<feature type="strand" evidence="8">
    <location>
        <begin position="145"/>
        <end position="148"/>
    </location>
</feature>
<feature type="helix" evidence="8">
    <location>
        <begin position="153"/>
        <end position="158"/>
    </location>
</feature>
<sequence>MRQKRAKSYRKQLLVYSHTFKFREPYQVLVDNQLVLECNNSNFNLPSGLKRTLQADVKVMITQCCIQALYETRNDGAINLAKQFERRRCNHSFKDPKSPAECIESVVNISGANKHRYVVASQDIDLRRKLRTVPGVPLIHLTRSVMVMEPLSTASAKASKITEEQKLYKGLNDPNIEKLQESGDGSGKESITKKRKLGPKAPNPLSVKKKKKVNSPSDEVKDKEDTSKEKKKRRRRKHKSNTNVPVSNGTTAAQ</sequence>